<accession>Q9CZ00</accession>
<accession>Q80XJ9</accession>
<accession>Q8BMU4</accession>
<keyword id="KW-0025">Alternative splicing</keyword>
<keyword id="KW-0597">Phosphoprotein</keyword>
<keyword id="KW-1185">Reference proteome</keyword>
<name>DBND1_MOUSE</name>
<gene>
    <name type="primary">Dbndd1</name>
</gene>
<protein>
    <recommendedName>
        <fullName>Dysbindin domain-containing protein 1</fullName>
    </recommendedName>
</protein>
<sequence length="160" mass="17479">MESPEGAGPGEIVKDVKVPQAALNVSAHETGDMCRTPVAEEEEEVGIPIPAPGFLQVTERRQPLSSVSSLEVHFDLLDLTELTDMSDQELAEVFADSDDENLATESPAGLHPLSRASCLRSPSWTKTRAEQNREKQPPSDPERQGTIVDTFLTVEEPKED</sequence>
<comment type="alternative products">
    <event type="alternative splicing"/>
    <isoform>
        <id>Q9CZ00-1</id>
        <name>1</name>
        <sequence type="displayed"/>
    </isoform>
    <isoform>
        <id>Q9CZ00-2</id>
        <name>2</name>
        <sequence type="described" ref="VSP_026215"/>
    </isoform>
</comment>
<comment type="similarity">
    <text evidence="5">Belongs to the dysbindin family.</text>
</comment>
<dbReference type="EMBL" id="AK013173">
    <property type="protein sequence ID" value="BAB28690.1"/>
    <property type="molecule type" value="mRNA"/>
</dbReference>
<dbReference type="EMBL" id="AK028187">
    <property type="protein sequence ID" value="BAC25799.1"/>
    <property type="molecule type" value="mRNA"/>
</dbReference>
<dbReference type="EMBL" id="BC046622">
    <property type="protein sequence ID" value="AAH46622.1"/>
    <property type="molecule type" value="mRNA"/>
</dbReference>
<dbReference type="CCDS" id="CCDS22761.3">
    <molecule id="Q9CZ00-1"/>
</dbReference>
<dbReference type="CCDS" id="CCDS52702.2">
    <molecule id="Q9CZ00-2"/>
</dbReference>
<dbReference type="RefSeq" id="NP_001164446.3">
    <molecule id="Q9CZ00-2"/>
    <property type="nucleotide sequence ID" value="NM_001170975.3"/>
</dbReference>
<dbReference type="RefSeq" id="NP_082422.4">
    <molecule id="Q9CZ00-1"/>
    <property type="nucleotide sequence ID" value="NM_028146.5"/>
</dbReference>
<dbReference type="FunCoup" id="Q9CZ00">
    <property type="interactions" value="229"/>
</dbReference>
<dbReference type="STRING" id="10090.ENSMUSP00000135524"/>
<dbReference type="iPTMnet" id="Q9CZ00"/>
<dbReference type="PhosphoSitePlus" id="Q9CZ00"/>
<dbReference type="PaxDb" id="10090-ENSMUSP00000135524"/>
<dbReference type="ProteomicsDB" id="279276">
    <molecule id="Q9CZ00-1"/>
</dbReference>
<dbReference type="ProteomicsDB" id="279277">
    <molecule id="Q9CZ00-2"/>
</dbReference>
<dbReference type="DNASU" id="72185"/>
<dbReference type="Ensembl" id="ENSMUST00000176155.3">
    <molecule id="Q9CZ00-1"/>
    <property type="protein sequence ID" value="ENSMUSP00000135524.3"/>
    <property type="gene ID" value="ENSMUSG00000031970.18"/>
</dbReference>
<dbReference type="Ensembl" id="ENSMUST00000177240.9">
    <molecule id="Q9CZ00-2"/>
    <property type="protein sequence ID" value="ENSMUSP00000135216.3"/>
    <property type="gene ID" value="ENSMUSG00000031970.18"/>
</dbReference>
<dbReference type="GeneID" id="72185"/>
<dbReference type="KEGG" id="mmu:72185"/>
<dbReference type="AGR" id="MGI:1919435"/>
<dbReference type="CTD" id="79007"/>
<dbReference type="MGI" id="MGI:1919435">
    <property type="gene designation" value="Dbndd1"/>
</dbReference>
<dbReference type="eggNOG" id="ENOG502S0DA">
    <property type="taxonomic scope" value="Eukaryota"/>
</dbReference>
<dbReference type="GeneTree" id="ENSGT00390000018903"/>
<dbReference type="InParanoid" id="Q9CZ00"/>
<dbReference type="OrthoDB" id="9891754at2759"/>
<dbReference type="PhylomeDB" id="Q9CZ00"/>
<dbReference type="BioGRID-ORCS" id="72185">
    <property type="hits" value="1 hit in 78 CRISPR screens"/>
</dbReference>
<dbReference type="PRO" id="PR:Q9CZ00"/>
<dbReference type="Proteomes" id="UP000000589">
    <property type="component" value="Chromosome 8"/>
</dbReference>
<dbReference type="RNAct" id="Q9CZ00">
    <property type="molecule type" value="protein"/>
</dbReference>
<dbReference type="GO" id="GO:0005737">
    <property type="term" value="C:cytoplasm"/>
    <property type="evidence" value="ECO:0007669"/>
    <property type="project" value="InterPro"/>
</dbReference>
<dbReference type="InterPro" id="IPR007531">
    <property type="entry name" value="Dysbindin"/>
</dbReference>
<dbReference type="PANTHER" id="PTHR16294:SF4">
    <property type="entry name" value="DYSBINDIN DOMAIN-CONTAINING PROTEIN 1"/>
    <property type="match status" value="1"/>
</dbReference>
<dbReference type="PANTHER" id="PTHR16294">
    <property type="entry name" value="DYSTROBREVIN BINDING PROTEIN 1 DYSBINDIN"/>
    <property type="match status" value="1"/>
</dbReference>
<dbReference type="Pfam" id="PF04440">
    <property type="entry name" value="Dysbindin"/>
    <property type="match status" value="1"/>
</dbReference>
<reference key="1">
    <citation type="journal article" date="2005" name="Science">
        <title>The transcriptional landscape of the mammalian genome.</title>
        <authorList>
            <person name="Carninci P."/>
            <person name="Kasukawa T."/>
            <person name="Katayama S."/>
            <person name="Gough J."/>
            <person name="Frith M.C."/>
            <person name="Maeda N."/>
            <person name="Oyama R."/>
            <person name="Ravasi T."/>
            <person name="Lenhard B."/>
            <person name="Wells C."/>
            <person name="Kodzius R."/>
            <person name="Shimokawa K."/>
            <person name="Bajic V.B."/>
            <person name="Brenner S.E."/>
            <person name="Batalov S."/>
            <person name="Forrest A.R."/>
            <person name="Zavolan M."/>
            <person name="Davis M.J."/>
            <person name="Wilming L.G."/>
            <person name="Aidinis V."/>
            <person name="Allen J.E."/>
            <person name="Ambesi-Impiombato A."/>
            <person name="Apweiler R."/>
            <person name="Aturaliya R.N."/>
            <person name="Bailey T.L."/>
            <person name="Bansal M."/>
            <person name="Baxter L."/>
            <person name="Beisel K.W."/>
            <person name="Bersano T."/>
            <person name="Bono H."/>
            <person name="Chalk A.M."/>
            <person name="Chiu K.P."/>
            <person name="Choudhary V."/>
            <person name="Christoffels A."/>
            <person name="Clutterbuck D.R."/>
            <person name="Crowe M.L."/>
            <person name="Dalla E."/>
            <person name="Dalrymple B.P."/>
            <person name="de Bono B."/>
            <person name="Della Gatta G."/>
            <person name="di Bernardo D."/>
            <person name="Down T."/>
            <person name="Engstrom P."/>
            <person name="Fagiolini M."/>
            <person name="Faulkner G."/>
            <person name="Fletcher C.F."/>
            <person name="Fukushima T."/>
            <person name="Furuno M."/>
            <person name="Futaki S."/>
            <person name="Gariboldi M."/>
            <person name="Georgii-Hemming P."/>
            <person name="Gingeras T.R."/>
            <person name="Gojobori T."/>
            <person name="Green R.E."/>
            <person name="Gustincich S."/>
            <person name="Harbers M."/>
            <person name="Hayashi Y."/>
            <person name="Hensch T.K."/>
            <person name="Hirokawa N."/>
            <person name="Hill D."/>
            <person name="Huminiecki L."/>
            <person name="Iacono M."/>
            <person name="Ikeo K."/>
            <person name="Iwama A."/>
            <person name="Ishikawa T."/>
            <person name="Jakt M."/>
            <person name="Kanapin A."/>
            <person name="Katoh M."/>
            <person name="Kawasawa Y."/>
            <person name="Kelso J."/>
            <person name="Kitamura H."/>
            <person name="Kitano H."/>
            <person name="Kollias G."/>
            <person name="Krishnan S.P."/>
            <person name="Kruger A."/>
            <person name="Kummerfeld S.K."/>
            <person name="Kurochkin I.V."/>
            <person name="Lareau L.F."/>
            <person name="Lazarevic D."/>
            <person name="Lipovich L."/>
            <person name="Liu J."/>
            <person name="Liuni S."/>
            <person name="McWilliam S."/>
            <person name="Madan Babu M."/>
            <person name="Madera M."/>
            <person name="Marchionni L."/>
            <person name="Matsuda H."/>
            <person name="Matsuzawa S."/>
            <person name="Miki H."/>
            <person name="Mignone F."/>
            <person name="Miyake S."/>
            <person name="Morris K."/>
            <person name="Mottagui-Tabar S."/>
            <person name="Mulder N."/>
            <person name="Nakano N."/>
            <person name="Nakauchi H."/>
            <person name="Ng P."/>
            <person name="Nilsson R."/>
            <person name="Nishiguchi S."/>
            <person name="Nishikawa S."/>
            <person name="Nori F."/>
            <person name="Ohara O."/>
            <person name="Okazaki Y."/>
            <person name="Orlando V."/>
            <person name="Pang K.C."/>
            <person name="Pavan W.J."/>
            <person name="Pavesi G."/>
            <person name="Pesole G."/>
            <person name="Petrovsky N."/>
            <person name="Piazza S."/>
            <person name="Reed J."/>
            <person name="Reid J.F."/>
            <person name="Ring B.Z."/>
            <person name="Ringwald M."/>
            <person name="Rost B."/>
            <person name="Ruan Y."/>
            <person name="Salzberg S.L."/>
            <person name="Sandelin A."/>
            <person name="Schneider C."/>
            <person name="Schoenbach C."/>
            <person name="Sekiguchi K."/>
            <person name="Semple C.A."/>
            <person name="Seno S."/>
            <person name="Sessa L."/>
            <person name="Sheng Y."/>
            <person name="Shibata Y."/>
            <person name="Shimada H."/>
            <person name="Shimada K."/>
            <person name="Silva D."/>
            <person name="Sinclair B."/>
            <person name="Sperling S."/>
            <person name="Stupka E."/>
            <person name="Sugiura K."/>
            <person name="Sultana R."/>
            <person name="Takenaka Y."/>
            <person name="Taki K."/>
            <person name="Tammoja K."/>
            <person name="Tan S.L."/>
            <person name="Tang S."/>
            <person name="Taylor M.S."/>
            <person name="Tegner J."/>
            <person name="Teichmann S.A."/>
            <person name="Ueda H.R."/>
            <person name="van Nimwegen E."/>
            <person name="Verardo R."/>
            <person name="Wei C.L."/>
            <person name="Yagi K."/>
            <person name="Yamanishi H."/>
            <person name="Zabarovsky E."/>
            <person name="Zhu S."/>
            <person name="Zimmer A."/>
            <person name="Hide W."/>
            <person name="Bult C."/>
            <person name="Grimmond S.M."/>
            <person name="Teasdale R.D."/>
            <person name="Liu E.T."/>
            <person name="Brusic V."/>
            <person name="Quackenbush J."/>
            <person name="Wahlestedt C."/>
            <person name="Mattick J.S."/>
            <person name="Hume D.A."/>
            <person name="Kai C."/>
            <person name="Sasaki D."/>
            <person name="Tomaru Y."/>
            <person name="Fukuda S."/>
            <person name="Kanamori-Katayama M."/>
            <person name="Suzuki M."/>
            <person name="Aoki J."/>
            <person name="Arakawa T."/>
            <person name="Iida J."/>
            <person name="Imamura K."/>
            <person name="Itoh M."/>
            <person name="Kato T."/>
            <person name="Kawaji H."/>
            <person name="Kawagashira N."/>
            <person name="Kawashima T."/>
            <person name="Kojima M."/>
            <person name="Kondo S."/>
            <person name="Konno H."/>
            <person name="Nakano K."/>
            <person name="Ninomiya N."/>
            <person name="Nishio T."/>
            <person name="Okada M."/>
            <person name="Plessy C."/>
            <person name="Shibata K."/>
            <person name="Shiraki T."/>
            <person name="Suzuki S."/>
            <person name="Tagami M."/>
            <person name="Waki K."/>
            <person name="Watahiki A."/>
            <person name="Okamura-Oho Y."/>
            <person name="Suzuki H."/>
            <person name="Kawai J."/>
            <person name="Hayashizaki Y."/>
        </authorList>
    </citation>
    <scope>NUCLEOTIDE SEQUENCE [LARGE SCALE MRNA] (ISOFORM 1)</scope>
    <source>
        <strain>C57BL/6J</strain>
    </source>
</reference>
<reference key="2">
    <citation type="journal article" date="2004" name="Genome Res.">
        <title>The status, quality, and expansion of the NIH full-length cDNA project: the Mammalian Gene Collection (MGC).</title>
        <authorList>
            <consortium name="The MGC Project Team"/>
        </authorList>
    </citation>
    <scope>NUCLEOTIDE SEQUENCE [LARGE SCALE MRNA] (ISOFORM 2)</scope>
    <source>
        <tissue>Olfactory epithelium</tissue>
    </source>
</reference>
<reference key="3">
    <citation type="journal article" date="2010" name="Cell">
        <title>A tissue-specific atlas of mouse protein phosphorylation and expression.</title>
        <authorList>
            <person name="Huttlin E.L."/>
            <person name="Jedrychowski M.P."/>
            <person name="Elias J.E."/>
            <person name="Goswami T."/>
            <person name="Rad R."/>
            <person name="Beausoleil S.A."/>
            <person name="Villen J."/>
            <person name="Haas W."/>
            <person name="Sowa M.E."/>
            <person name="Gygi S.P."/>
        </authorList>
    </citation>
    <scope>IDENTIFICATION BY MASS SPECTROMETRY [LARGE SCALE ANALYSIS]</scope>
    <source>
        <tissue>Brain</tissue>
    </source>
</reference>
<organism>
    <name type="scientific">Mus musculus</name>
    <name type="common">Mouse</name>
    <dbReference type="NCBI Taxonomy" id="10090"/>
    <lineage>
        <taxon>Eukaryota</taxon>
        <taxon>Metazoa</taxon>
        <taxon>Chordata</taxon>
        <taxon>Craniata</taxon>
        <taxon>Vertebrata</taxon>
        <taxon>Euteleostomi</taxon>
        <taxon>Mammalia</taxon>
        <taxon>Eutheria</taxon>
        <taxon>Euarchontoglires</taxon>
        <taxon>Glires</taxon>
        <taxon>Rodentia</taxon>
        <taxon>Myomorpha</taxon>
        <taxon>Muroidea</taxon>
        <taxon>Muridae</taxon>
        <taxon>Murinae</taxon>
        <taxon>Mus</taxon>
        <taxon>Mus</taxon>
    </lineage>
</organism>
<feature type="chain" id="PRO_0000291747" description="Dysbindin domain-containing protein 1">
    <location>
        <begin position="1"/>
        <end position="160"/>
    </location>
</feature>
<feature type="region of interest" description="Disordered" evidence="3">
    <location>
        <begin position="95"/>
        <end position="160"/>
    </location>
</feature>
<feature type="compositionally biased region" description="Basic and acidic residues" evidence="3">
    <location>
        <begin position="127"/>
        <end position="143"/>
    </location>
</feature>
<feature type="modified residue" description="Phosphoserine" evidence="1">
    <location>
        <position position="3"/>
    </location>
</feature>
<feature type="modified residue" description="Phosphoserine" evidence="2">
    <location>
        <position position="97"/>
    </location>
</feature>
<feature type="modified residue" description="Phosphoserine" evidence="2">
    <location>
        <position position="121"/>
    </location>
</feature>
<feature type="splice variant" id="VSP_026215" description="In isoform 2." evidence="4">
    <original>QPLSSVSSLEVHFDLLDLTELTDMSDQELAEVFADSDDENLATESPAG</original>
    <variation>R</variation>
    <location>
        <begin position="62"/>
        <end position="109"/>
    </location>
</feature>
<feature type="sequence conflict" description="In Ref. 1; BAC25799." evidence="5" ref="1">
    <original>QP</original>
    <variation>TA</variation>
    <location>
        <begin position="136"/>
        <end position="137"/>
    </location>
</feature>
<evidence type="ECO:0000250" key="1">
    <source>
        <dbReference type="UniProtKB" id="Q5M831"/>
    </source>
</evidence>
<evidence type="ECO:0000250" key="2">
    <source>
        <dbReference type="UniProtKB" id="Q9H9R9"/>
    </source>
</evidence>
<evidence type="ECO:0000256" key="3">
    <source>
        <dbReference type="SAM" id="MobiDB-lite"/>
    </source>
</evidence>
<evidence type="ECO:0000303" key="4">
    <source>
    </source>
</evidence>
<evidence type="ECO:0000305" key="5"/>
<proteinExistence type="evidence at protein level"/>